<sequence>MSWQHFKQTWLIKFWAPAPAVIAAGILSTYYFGITGTFWAVTGEFTRWGGQILQLFGVHAEQWGYYKLIHLEGTPLTRIDGMMILGMFGGCFAAALWANNVKLRMPRSRIRIVQAVAGGIIAGFGARLAMGCNLAAFFTGIPQFSLHAWFFALATAIGSWFGARFTLLPIFRIPVKMQKVSAASPLTQKPDQARRRFRLGMLVFIGMIGWALLTAMHQPKLGLAMLFGVGFGLLIERAQICFTSAFRDLWISGRAHMAKAIIFGMAVSAIGIFSYVQLGVAPKIMWAGPNAVIGGLLFGFGIVLAGGCETGWMYRAVEGQVHYWWVGLGNVIGSTILAYYWDDFAPALATSWDKVNLLNTFGPLGGLLVTYLLLFTALMLIIGWEKRFFRRAGLTPAKESV</sequence>
<gene>
    <name type="primary">yedE</name>
    <name type="ordered locus">STM1965</name>
</gene>
<comment type="subcellular location">
    <subcellularLocation>
        <location evidence="1">Cell inner membrane</location>
        <topology evidence="2">Multi-pass membrane protein</topology>
    </subcellularLocation>
</comment>
<comment type="similarity">
    <text evidence="3">Belongs to the TsuA/YedE (TC 9.B.102) family.</text>
</comment>
<comment type="sequence caution" evidence="3">
    <conflict type="erroneous initiation">
        <sequence resource="EMBL-CDS" id="AAL20877"/>
    </conflict>
</comment>
<reference key="1">
    <citation type="journal article" date="1993" name="J. Gen. Microbiol.">
        <title>Organization of the Escherichia coli and Salmonella typhimurium chromosomes between flagellar regions IIIa and IIIb, including a large non-coding region.</title>
        <authorList>
            <person name="Raha M."/>
            <person name="Kihara M."/>
            <person name="Kawagishi I."/>
            <person name="Macnab R.M."/>
        </authorList>
    </citation>
    <scope>NUCLEOTIDE SEQUENCE [GENOMIC DNA]</scope>
    <source>
        <strain>SJW1103</strain>
    </source>
</reference>
<reference key="2">
    <citation type="journal article" date="2001" name="Nature">
        <title>Complete genome sequence of Salmonella enterica serovar Typhimurium LT2.</title>
        <authorList>
            <person name="McClelland M."/>
            <person name="Sanderson K.E."/>
            <person name="Spieth J."/>
            <person name="Clifton S.W."/>
            <person name="Latreille P."/>
            <person name="Courtney L."/>
            <person name="Porwollik S."/>
            <person name="Ali J."/>
            <person name="Dante M."/>
            <person name="Du F."/>
            <person name="Hou S."/>
            <person name="Layman D."/>
            <person name="Leonard S."/>
            <person name="Nguyen C."/>
            <person name="Scott K."/>
            <person name="Holmes A."/>
            <person name="Grewal N."/>
            <person name="Mulvaney E."/>
            <person name="Ryan E."/>
            <person name="Sun H."/>
            <person name="Florea L."/>
            <person name="Miller W."/>
            <person name="Stoneking T."/>
            <person name="Nhan M."/>
            <person name="Waterston R."/>
            <person name="Wilson R.K."/>
        </authorList>
    </citation>
    <scope>NUCLEOTIDE SEQUENCE [LARGE SCALE GENOMIC DNA]</scope>
    <source>
        <strain>LT2 / SGSC1412 / ATCC 700720</strain>
    </source>
</reference>
<protein>
    <recommendedName>
        <fullName evidence="3">Probable transporter YedE</fullName>
    </recommendedName>
</protein>
<organism>
    <name type="scientific">Salmonella typhimurium (strain LT2 / SGSC1412 / ATCC 700720)</name>
    <dbReference type="NCBI Taxonomy" id="99287"/>
    <lineage>
        <taxon>Bacteria</taxon>
        <taxon>Pseudomonadati</taxon>
        <taxon>Pseudomonadota</taxon>
        <taxon>Gammaproteobacteria</taxon>
        <taxon>Enterobacterales</taxon>
        <taxon>Enterobacteriaceae</taxon>
        <taxon>Salmonella</taxon>
    </lineage>
</organism>
<dbReference type="EMBL" id="L13280">
    <property type="protein sequence ID" value="AAA71972.1"/>
    <property type="molecule type" value="Unassigned_DNA"/>
</dbReference>
<dbReference type="EMBL" id="AE006468">
    <property type="protein sequence ID" value="AAL20877.1"/>
    <property type="status" value="ALT_INIT"/>
    <property type="molecule type" value="Genomic_DNA"/>
</dbReference>
<dbReference type="RefSeq" id="NP_460918.3">
    <property type="nucleotide sequence ID" value="NC_003197.2"/>
</dbReference>
<dbReference type="STRING" id="99287.STM1965"/>
<dbReference type="PaxDb" id="99287-STM1965"/>
<dbReference type="GeneID" id="1253486"/>
<dbReference type="KEGG" id="stm:STM1965"/>
<dbReference type="PATRIC" id="fig|99287.12.peg.2081"/>
<dbReference type="HOGENOM" id="CLU_041737_0_0_6"/>
<dbReference type="PhylomeDB" id="Q06400"/>
<dbReference type="Proteomes" id="UP000001014">
    <property type="component" value="Chromosome"/>
</dbReference>
<dbReference type="GO" id="GO:0005886">
    <property type="term" value="C:plasma membrane"/>
    <property type="evidence" value="ECO:0000318"/>
    <property type="project" value="GO_Central"/>
</dbReference>
<dbReference type="InterPro" id="IPR007272">
    <property type="entry name" value="Sulf_transp_TsuA/YedE"/>
</dbReference>
<dbReference type="InterPro" id="IPR047732">
    <property type="entry name" value="YedE-like"/>
</dbReference>
<dbReference type="NCBIfam" id="NF033796">
    <property type="entry name" value="selen_YedE_FdhT"/>
    <property type="match status" value="1"/>
</dbReference>
<dbReference type="PANTHER" id="PTHR30574">
    <property type="entry name" value="INNER MEMBRANE PROTEIN YEDE"/>
    <property type="match status" value="1"/>
</dbReference>
<dbReference type="PANTHER" id="PTHR30574:SF1">
    <property type="entry name" value="SULPHUR TRANSPORT DOMAIN-CONTAINING PROTEIN"/>
    <property type="match status" value="1"/>
</dbReference>
<dbReference type="Pfam" id="PF04143">
    <property type="entry name" value="Sulf_transp"/>
    <property type="match status" value="2"/>
</dbReference>
<proteinExistence type="inferred from homology"/>
<evidence type="ECO:0000250" key="1">
    <source>
        <dbReference type="UniProtKB" id="P31064"/>
    </source>
</evidence>
<evidence type="ECO:0000255" key="2"/>
<evidence type="ECO:0000305" key="3"/>
<accession>Q06400</accession>
<feature type="chain" id="PRO_0000169091" description="Probable transporter YedE">
    <location>
        <begin position="1"/>
        <end position="401"/>
    </location>
</feature>
<feature type="topological domain" description="Cytoplasmic" evidence="3">
    <location>
        <begin position="1"/>
        <end position="13"/>
    </location>
</feature>
<feature type="transmembrane region" description="Helical" evidence="2">
    <location>
        <begin position="14"/>
        <end position="34"/>
    </location>
</feature>
<feature type="topological domain" description="Periplasmic" evidence="3">
    <location>
        <begin position="35"/>
        <end position="78"/>
    </location>
</feature>
<feature type="transmembrane region" description="Helical" evidence="2">
    <location>
        <begin position="79"/>
        <end position="99"/>
    </location>
</feature>
<feature type="topological domain" description="Cytoplasmic" evidence="3">
    <location>
        <begin position="100"/>
        <end position="118"/>
    </location>
</feature>
<feature type="transmembrane region" description="Helical" evidence="2">
    <location>
        <begin position="119"/>
        <end position="141"/>
    </location>
</feature>
<feature type="topological domain" description="Periplasmic" evidence="3">
    <location>
        <begin position="142"/>
        <end position="145"/>
    </location>
</feature>
<feature type="transmembrane region" description="Helical" evidence="2">
    <location>
        <begin position="146"/>
        <end position="168"/>
    </location>
</feature>
<feature type="topological domain" description="Cytoplasmic" evidence="3">
    <location>
        <begin position="169"/>
        <end position="198"/>
    </location>
</feature>
<feature type="transmembrane region" description="Helical" evidence="2">
    <location>
        <begin position="199"/>
        <end position="219"/>
    </location>
</feature>
<feature type="topological domain" description="Periplasmic" evidence="3">
    <location>
        <begin position="220"/>
        <end position="221"/>
    </location>
</feature>
<feature type="transmembrane region" description="Helical" evidence="2">
    <location>
        <begin position="222"/>
        <end position="242"/>
    </location>
</feature>
<feature type="topological domain" description="Cytoplasmic" evidence="3">
    <location>
        <begin position="243"/>
        <end position="259"/>
    </location>
</feature>
<feature type="transmembrane region" description="Helical" evidence="2">
    <location>
        <begin position="260"/>
        <end position="280"/>
    </location>
</feature>
<feature type="topological domain" description="Periplasmic" evidence="3">
    <location>
        <begin position="281"/>
        <end position="283"/>
    </location>
</feature>
<feature type="transmembrane region" description="Helical" evidence="2">
    <location>
        <begin position="284"/>
        <end position="304"/>
    </location>
</feature>
<feature type="topological domain" description="Cytoplasmic" evidence="3">
    <location>
        <begin position="305"/>
        <end position="320"/>
    </location>
</feature>
<feature type="transmembrane region" description="Helical" evidence="2">
    <location>
        <begin position="321"/>
        <end position="341"/>
    </location>
</feature>
<feature type="topological domain" description="Periplasmic" evidence="3">
    <location>
        <begin position="342"/>
        <end position="363"/>
    </location>
</feature>
<feature type="transmembrane region" description="Helical" evidence="2">
    <location>
        <begin position="364"/>
        <end position="384"/>
    </location>
</feature>
<feature type="topological domain" description="Cytoplasmic" evidence="1">
    <location>
        <begin position="385"/>
        <end position="401"/>
    </location>
</feature>
<keyword id="KW-0997">Cell inner membrane</keyword>
<keyword id="KW-1003">Cell membrane</keyword>
<keyword id="KW-0472">Membrane</keyword>
<keyword id="KW-1185">Reference proteome</keyword>
<keyword id="KW-0812">Transmembrane</keyword>
<keyword id="KW-1133">Transmembrane helix</keyword>
<keyword id="KW-0813">Transport</keyword>
<name>YEDE_SALTY</name>